<reference key="1">
    <citation type="journal article" date="2005" name="J. Bacteriol.">
        <title>Insights on evolution of virulence and resistance from the complete genome analysis of an early methicillin-resistant Staphylococcus aureus strain and a biofilm-producing methicillin-resistant Staphylococcus epidermidis strain.</title>
        <authorList>
            <person name="Gill S.R."/>
            <person name="Fouts D.E."/>
            <person name="Archer G.L."/>
            <person name="Mongodin E.F."/>
            <person name="DeBoy R.T."/>
            <person name="Ravel J."/>
            <person name="Paulsen I.T."/>
            <person name="Kolonay J.F."/>
            <person name="Brinkac L.M."/>
            <person name="Beanan M.J."/>
            <person name="Dodson R.J."/>
            <person name="Daugherty S.C."/>
            <person name="Madupu R."/>
            <person name="Angiuoli S.V."/>
            <person name="Durkin A.S."/>
            <person name="Haft D.H."/>
            <person name="Vamathevan J.J."/>
            <person name="Khouri H."/>
            <person name="Utterback T.R."/>
            <person name="Lee C."/>
            <person name="Dimitrov G."/>
            <person name="Jiang L."/>
            <person name="Qin H."/>
            <person name="Weidman J."/>
            <person name="Tran K."/>
            <person name="Kang K.H."/>
            <person name="Hance I.R."/>
            <person name="Nelson K.E."/>
            <person name="Fraser C.M."/>
        </authorList>
    </citation>
    <scope>NUCLEOTIDE SEQUENCE [LARGE SCALE GENOMIC DNA]</scope>
    <source>
        <strain>ATCC 35984 / DSM 28319 / BCRC 17069 / CCUG 31568 / BM 3577 / RP62A</strain>
    </source>
</reference>
<evidence type="ECO:0000255" key="1">
    <source>
        <dbReference type="HAMAP-Rule" id="MF_00178"/>
    </source>
</evidence>
<feature type="chain" id="PRO_0000134812" description="6,7-dimethyl-8-ribityllumazine synthase">
    <location>
        <begin position="1"/>
        <end position="153"/>
    </location>
</feature>
<feature type="active site" description="Proton donor" evidence="1">
    <location>
        <position position="87"/>
    </location>
</feature>
<feature type="binding site" evidence="1">
    <location>
        <position position="21"/>
    </location>
    <ligand>
        <name>5-amino-6-(D-ribitylamino)uracil</name>
        <dbReference type="ChEBI" id="CHEBI:15934"/>
    </ligand>
</feature>
<feature type="binding site" evidence="1">
    <location>
        <begin position="55"/>
        <end position="57"/>
    </location>
    <ligand>
        <name>5-amino-6-(D-ribitylamino)uracil</name>
        <dbReference type="ChEBI" id="CHEBI:15934"/>
    </ligand>
</feature>
<feature type="binding site" evidence="1">
    <location>
        <begin position="79"/>
        <end position="81"/>
    </location>
    <ligand>
        <name>5-amino-6-(D-ribitylamino)uracil</name>
        <dbReference type="ChEBI" id="CHEBI:15934"/>
    </ligand>
</feature>
<feature type="binding site" evidence="1">
    <location>
        <begin position="84"/>
        <end position="85"/>
    </location>
    <ligand>
        <name>(2S)-2-hydroxy-3-oxobutyl phosphate</name>
        <dbReference type="ChEBI" id="CHEBI:58830"/>
    </ligand>
</feature>
<feature type="binding site" evidence="1">
    <location>
        <position position="112"/>
    </location>
    <ligand>
        <name>5-amino-6-(D-ribitylamino)uracil</name>
        <dbReference type="ChEBI" id="CHEBI:15934"/>
    </ligand>
</feature>
<feature type="binding site" evidence="1">
    <location>
        <position position="126"/>
    </location>
    <ligand>
        <name>(2S)-2-hydroxy-3-oxobutyl phosphate</name>
        <dbReference type="ChEBI" id="CHEBI:58830"/>
    </ligand>
</feature>
<protein>
    <recommendedName>
        <fullName evidence="1">6,7-dimethyl-8-ribityllumazine synthase</fullName>
        <shortName evidence="1">DMRL synthase</shortName>
        <shortName evidence="1">LS</shortName>
        <shortName evidence="1">Lumazine synthase</shortName>
        <ecNumber evidence="1">2.5.1.78</ecNumber>
    </recommendedName>
</protein>
<comment type="function">
    <text evidence="1">Catalyzes the formation of 6,7-dimethyl-8-ribityllumazine by condensation of 5-amino-6-(D-ribitylamino)uracil with 3,4-dihydroxy-2-butanone 4-phosphate. This is the penultimate step in the biosynthesis of riboflavin.</text>
</comment>
<comment type="catalytic activity">
    <reaction evidence="1">
        <text>(2S)-2-hydroxy-3-oxobutyl phosphate + 5-amino-6-(D-ribitylamino)uracil = 6,7-dimethyl-8-(1-D-ribityl)lumazine + phosphate + 2 H2O + H(+)</text>
        <dbReference type="Rhea" id="RHEA:26152"/>
        <dbReference type="ChEBI" id="CHEBI:15377"/>
        <dbReference type="ChEBI" id="CHEBI:15378"/>
        <dbReference type="ChEBI" id="CHEBI:15934"/>
        <dbReference type="ChEBI" id="CHEBI:43474"/>
        <dbReference type="ChEBI" id="CHEBI:58201"/>
        <dbReference type="ChEBI" id="CHEBI:58830"/>
        <dbReference type="EC" id="2.5.1.78"/>
    </reaction>
</comment>
<comment type="pathway">
    <text evidence="1">Cofactor biosynthesis; riboflavin biosynthesis; riboflavin from 2-hydroxy-3-oxobutyl phosphate and 5-amino-6-(D-ribitylamino)uracil: step 1/2.</text>
</comment>
<comment type="subunit">
    <text evidence="1">Forms an icosahedral capsid composed of 60 subunits, arranged as a dodecamer of pentamers.</text>
</comment>
<comment type="similarity">
    <text evidence="1">Belongs to the DMRL synthase family.</text>
</comment>
<accession>Q5HNE4</accession>
<name>RISB_STAEQ</name>
<dbReference type="EC" id="2.5.1.78" evidence="1"/>
<dbReference type="EMBL" id="CP000029">
    <property type="protein sequence ID" value="AAW54661.1"/>
    <property type="molecule type" value="Genomic_DNA"/>
</dbReference>
<dbReference type="SMR" id="Q5HNE4"/>
<dbReference type="STRING" id="176279.SERP1325"/>
<dbReference type="KEGG" id="ser:SERP1325"/>
<dbReference type="eggNOG" id="COG0054">
    <property type="taxonomic scope" value="Bacteria"/>
</dbReference>
<dbReference type="HOGENOM" id="CLU_089358_1_1_9"/>
<dbReference type="UniPathway" id="UPA00275">
    <property type="reaction ID" value="UER00404"/>
</dbReference>
<dbReference type="Proteomes" id="UP000000531">
    <property type="component" value="Chromosome"/>
</dbReference>
<dbReference type="GO" id="GO:0005829">
    <property type="term" value="C:cytosol"/>
    <property type="evidence" value="ECO:0007669"/>
    <property type="project" value="TreeGrafter"/>
</dbReference>
<dbReference type="GO" id="GO:0009349">
    <property type="term" value="C:riboflavin synthase complex"/>
    <property type="evidence" value="ECO:0007669"/>
    <property type="project" value="InterPro"/>
</dbReference>
<dbReference type="GO" id="GO:0000906">
    <property type="term" value="F:6,7-dimethyl-8-ribityllumazine synthase activity"/>
    <property type="evidence" value="ECO:0007669"/>
    <property type="project" value="UniProtKB-UniRule"/>
</dbReference>
<dbReference type="GO" id="GO:0009231">
    <property type="term" value="P:riboflavin biosynthetic process"/>
    <property type="evidence" value="ECO:0007669"/>
    <property type="project" value="UniProtKB-UniRule"/>
</dbReference>
<dbReference type="CDD" id="cd09209">
    <property type="entry name" value="Lumazine_synthase-I"/>
    <property type="match status" value="1"/>
</dbReference>
<dbReference type="FunFam" id="3.40.50.960:FF:000001">
    <property type="entry name" value="6,7-dimethyl-8-ribityllumazine synthase"/>
    <property type="match status" value="1"/>
</dbReference>
<dbReference type="Gene3D" id="3.40.50.960">
    <property type="entry name" value="Lumazine/riboflavin synthase"/>
    <property type="match status" value="1"/>
</dbReference>
<dbReference type="HAMAP" id="MF_00178">
    <property type="entry name" value="Lumazine_synth"/>
    <property type="match status" value="1"/>
</dbReference>
<dbReference type="InterPro" id="IPR034964">
    <property type="entry name" value="LS"/>
</dbReference>
<dbReference type="InterPro" id="IPR002180">
    <property type="entry name" value="LS/RS"/>
</dbReference>
<dbReference type="InterPro" id="IPR036467">
    <property type="entry name" value="LS/RS_sf"/>
</dbReference>
<dbReference type="NCBIfam" id="TIGR00114">
    <property type="entry name" value="lumazine-synth"/>
    <property type="match status" value="1"/>
</dbReference>
<dbReference type="NCBIfam" id="NF000812">
    <property type="entry name" value="PRK00061.1-4"/>
    <property type="match status" value="1"/>
</dbReference>
<dbReference type="PANTHER" id="PTHR21058:SF0">
    <property type="entry name" value="6,7-DIMETHYL-8-RIBITYLLUMAZINE SYNTHASE"/>
    <property type="match status" value="1"/>
</dbReference>
<dbReference type="PANTHER" id="PTHR21058">
    <property type="entry name" value="6,7-DIMETHYL-8-RIBITYLLUMAZINE SYNTHASE DMRL SYNTHASE LUMAZINE SYNTHASE"/>
    <property type="match status" value="1"/>
</dbReference>
<dbReference type="Pfam" id="PF00885">
    <property type="entry name" value="DMRL_synthase"/>
    <property type="match status" value="1"/>
</dbReference>
<dbReference type="SUPFAM" id="SSF52121">
    <property type="entry name" value="Lumazine synthase"/>
    <property type="match status" value="1"/>
</dbReference>
<gene>
    <name evidence="1" type="primary">ribH</name>
    <name type="ordered locus">SERP1325</name>
</gene>
<keyword id="KW-1185">Reference proteome</keyword>
<keyword id="KW-0686">Riboflavin biosynthesis</keyword>
<keyword id="KW-0808">Transferase</keyword>
<sequence>MNFEGKLVGKDLKIAIVVSRFNDFITTRLLEGAKDTLIRHEVEDTNIDVAYVPGAFEIPLVAKKLAQKGEYDAVITLGCVIRGATSHYDYVCNEVAKGVSKANDISDTPVIFGVLTTESIEQAVERAGTKAGNKGSEAAVSAIEMANLIKQIN</sequence>
<proteinExistence type="inferred from homology"/>
<organism>
    <name type="scientific">Staphylococcus epidermidis (strain ATCC 35984 / DSM 28319 / BCRC 17069 / CCUG 31568 / BM 3577 / RP62A)</name>
    <dbReference type="NCBI Taxonomy" id="176279"/>
    <lineage>
        <taxon>Bacteria</taxon>
        <taxon>Bacillati</taxon>
        <taxon>Bacillota</taxon>
        <taxon>Bacilli</taxon>
        <taxon>Bacillales</taxon>
        <taxon>Staphylococcaceae</taxon>
        <taxon>Staphylococcus</taxon>
    </lineage>
</organism>